<keyword id="KW-0963">Cytoplasm</keyword>
<keyword id="KW-0275">Fatty acid biosynthesis</keyword>
<keyword id="KW-0276">Fatty acid metabolism</keyword>
<keyword id="KW-0444">Lipid biosynthesis</keyword>
<keyword id="KW-0443">Lipid metabolism</keyword>
<keyword id="KW-0596">Phosphopantetheine</keyword>
<keyword id="KW-0597">Phosphoprotein</keyword>
<keyword id="KW-1185">Reference proteome</keyword>
<comment type="function">
    <text evidence="1">Carrier of the growing fatty acid chain in fatty acid biosynthesis.</text>
</comment>
<comment type="pathway">
    <text evidence="1">Lipid metabolism; fatty acid biosynthesis.</text>
</comment>
<comment type="subcellular location">
    <subcellularLocation>
        <location evidence="1">Cytoplasm</location>
    </subcellularLocation>
</comment>
<comment type="PTM">
    <text evidence="1">4'-phosphopantetheine is transferred from CoA to a specific serine of apo-ACP by AcpS. This modification is essential for activity because fatty acids are bound in thioester linkage to the sulfhydryl of the prosthetic group.</text>
</comment>
<comment type="similarity">
    <text evidence="1">Belongs to the acyl carrier protein (ACP) family.</text>
</comment>
<dbReference type="EMBL" id="AM295250">
    <property type="protein sequence ID" value="CAL27765.1"/>
    <property type="molecule type" value="Genomic_DNA"/>
</dbReference>
<dbReference type="RefSeq" id="WP_002480667.1">
    <property type="nucleotide sequence ID" value="NC_012121.1"/>
</dbReference>
<dbReference type="SMR" id="B9DPJ1"/>
<dbReference type="KEGG" id="sca:SCA_0855"/>
<dbReference type="eggNOG" id="COG0236">
    <property type="taxonomic scope" value="Bacteria"/>
</dbReference>
<dbReference type="HOGENOM" id="CLU_108696_5_1_9"/>
<dbReference type="OrthoDB" id="9804551at2"/>
<dbReference type="BioCyc" id="SCAR396513:SCA_RS04325-MONOMER"/>
<dbReference type="UniPathway" id="UPA00094"/>
<dbReference type="Proteomes" id="UP000000444">
    <property type="component" value="Chromosome"/>
</dbReference>
<dbReference type="GO" id="GO:0005829">
    <property type="term" value="C:cytosol"/>
    <property type="evidence" value="ECO:0007669"/>
    <property type="project" value="TreeGrafter"/>
</dbReference>
<dbReference type="GO" id="GO:0016020">
    <property type="term" value="C:membrane"/>
    <property type="evidence" value="ECO:0007669"/>
    <property type="project" value="GOC"/>
</dbReference>
<dbReference type="GO" id="GO:0000035">
    <property type="term" value="F:acyl binding"/>
    <property type="evidence" value="ECO:0007669"/>
    <property type="project" value="TreeGrafter"/>
</dbReference>
<dbReference type="GO" id="GO:0000036">
    <property type="term" value="F:acyl carrier activity"/>
    <property type="evidence" value="ECO:0007669"/>
    <property type="project" value="UniProtKB-UniRule"/>
</dbReference>
<dbReference type="GO" id="GO:0009245">
    <property type="term" value="P:lipid A biosynthetic process"/>
    <property type="evidence" value="ECO:0007669"/>
    <property type="project" value="TreeGrafter"/>
</dbReference>
<dbReference type="FunFam" id="1.10.1200.10:FF:000001">
    <property type="entry name" value="Acyl carrier protein"/>
    <property type="match status" value="1"/>
</dbReference>
<dbReference type="Gene3D" id="1.10.1200.10">
    <property type="entry name" value="ACP-like"/>
    <property type="match status" value="1"/>
</dbReference>
<dbReference type="HAMAP" id="MF_01217">
    <property type="entry name" value="Acyl_carrier"/>
    <property type="match status" value="1"/>
</dbReference>
<dbReference type="InterPro" id="IPR003231">
    <property type="entry name" value="ACP"/>
</dbReference>
<dbReference type="InterPro" id="IPR036736">
    <property type="entry name" value="ACP-like_sf"/>
</dbReference>
<dbReference type="InterPro" id="IPR009081">
    <property type="entry name" value="PP-bd_ACP"/>
</dbReference>
<dbReference type="InterPro" id="IPR006162">
    <property type="entry name" value="Ppantetheine_attach_site"/>
</dbReference>
<dbReference type="NCBIfam" id="TIGR00517">
    <property type="entry name" value="acyl_carrier"/>
    <property type="match status" value="1"/>
</dbReference>
<dbReference type="NCBIfam" id="NF002148">
    <property type="entry name" value="PRK00982.1-2"/>
    <property type="match status" value="1"/>
</dbReference>
<dbReference type="NCBIfam" id="NF002150">
    <property type="entry name" value="PRK00982.1-4"/>
    <property type="match status" value="1"/>
</dbReference>
<dbReference type="NCBIfam" id="NF002151">
    <property type="entry name" value="PRK00982.1-5"/>
    <property type="match status" value="1"/>
</dbReference>
<dbReference type="PANTHER" id="PTHR20863">
    <property type="entry name" value="ACYL CARRIER PROTEIN"/>
    <property type="match status" value="1"/>
</dbReference>
<dbReference type="PANTHER" id="PTHR20863:SF76">
    <property type="entry name" value="CARRIER DOMAIN-CONTAINING PROTEIN"/>
    <property type="match status" value="1"/>
</dbReference>
<dbReference type="Pfam" id="PF00550">
    <property type="entry name" value="PP-binding"/>
    <property type="match status" value="1"/>
</dbReference>
<dbReference type="SUPFAM" id="SSF47336">
    <property type="entry name" value="ACP-like"/>
    <property type="match status" value="1"/>
</dbReference>
<dbReference type="PROSITE" id="PS50075">
    <property type="entry name" value="CARRIER"/>
    <property type="match status" value="1"/>
</dbReference>
<dbReference type="PROSITE" id="PS00012">
    <property type="entry name" value="PHOSPHOPANTETHEINE"/>
    <property type="match status" value="1"/>
</dbReference>
<accession>B9DPJ1</accession>
<name>ACP_STACT</name>
<organism>
    <name type="scientific">Staphylococcus carnosus (strain TM300)</name>
    <dbReference type="NCBI Taxonomy" id="396513"/>
    <lineage>
        <taxon>Bacteria</taxon>
        <taxon>Bacillati</taxon>
        <taxon>Bacillota</taxon>
        <taxon>Bacilli</taxon>
        <taxon>Bacillales</taxon>
        <taxon>Staphylococcaceae</taxon>
        <taxon>Staphylococcus</taxon>
    </lineage>
</organism>
<feature type="chain" id="PRO_1000164802" description="Acyl carrier protein">
    <location>
        <begin position="1"/>
        <end position="77"/>
    </location>
</feature>
<feature type="domain" description="Carrier" evidence="2">
    <location>
        <begin position="1"/>
        <end position="76"/>
    </location>
</feature>
<feature type="modified residue" description="O-(pantetheine 4'-phosphoryl)serine" evidence="2">
    <location>
        <position position="36"/>
    </location>
</feature>
<protein>
    <recommendedName>
        <fullName evidence="1">Acyl carrier protein</fullName>
        <shortName evidence="1">ACP</shortName>
    </recommendedName>
</protein>
<proteinExistence type="inferred from homology"/>
<sequence length="77" mass="8562">MENFDKVKDIIVDRLGVDADKVTEDASFKDDLGADSLDIAELVMELEDEFGTEIPDEEAEKINTVGDAVNFINNLEK</sequence>
<evidence type="ECO:0000255" key="1">
    <source>
        <dbReference type="HAMAP-Rule" id="MF_01217"/>
    </source>
</evidence>
<evidence type="ECO:0000255" key="2">
    <source>
        <dbReference type="PROSITE-ProRule" id="PRU00258"/>
    </source>
</evidence>
<reference key="1">
    <citation type="journal article" date="2009" name="Appl. Environ. Microbiol.">
        <title>Genome analysis of the meat starter culture bacterium Staphylococcus carnosus TM300.</title>
        <authorList>
            <person name="Rosenstein R."/>
            <person name="Nerz C."/>
            <person name="Biswas L."/>
            <person name="Resch A."/>
            <person name="Raddatz G."/>
            <person name="Schuster S.C."/>
            <person name="Goetz F."/>
        </authorList>
    </citation>
    <scope>NUCLEOTIDE SEQUENCE [LARGE SCALE GENOMIC DNA]</scope>
    <source>
        <strain>TM300</strain>
    </source>
</reference>
<gene>
    <name evidence="1" type="primary">acpP</name>
    <name type="ordered locus">Sca_0855</name>
</gene>